<evidence type="ECO:0000255" key="1">
    <source>
        <dbReference type="HAMAP-Rule" id="MF_00321"/>
    </source>
</evidence>
<dbReference type="EMBL" id="AM398681">
    <property type="protein sequence ID" value="CAL44129.1"/>
    <property type="molecule type" value="Genomic_DNA"/>
</dbReference>
<dbReference type="RefSeq" id="YP_001296931.1">
    <property type="nucleotide sequence ID" value="NC_009613.3"/>
</dbReference>
<dbReference type="SMR" id="A6H1A5"/>
<dbReference type="STRING" id="402612.FP2067"/>
<dbReference type="EnsemblBacteria" id="CAL44129">
    <property type="protein sequence ID" value="CAL44129"/>
    <property type="gene ID" value="FP2067"/>
</dbReference>
<dbReference type="KEGG" id="fps:FP2067"/>
<dbReference type="PATRIC" id="fig|402612.5.peg.2094"/>
<dbReference type="eggNOG" id="COG0218">
    <property type="taxonomic scope" value="Bacteria"/>
</dbReference>
<dbReference type="HOGENOM" id="CLU_033732_3_1_10"/>
<dbReference type="OrthoDB" id="9804921at2"/>
<dbReference type="Proteomes" id="UP000006394">
    <property type="component" value="Chromosome"/>
</dbReference>
<dbReference type="GO" id="GO:0005525">
    <property type="term" value="F:GTP binding"/>
    <property type="evidence" value="ECO:0007669"/>
    <property type="project" value="UniProtKB-UniRule"/>
</dbReference>
<dbReference type="GO" id="GO:0046872">
    <property type="term" value="F:metal ion binding"/>
    <property type="evidence" value="ECO:0007669"/>
    <property type="project" value="UniProtKB-KW"/>
</dbReference>
<dbReference type="GO" id="GO:0000917">
    <property type="term" value="P:division septum assembly"/>
    <property type="evidence" value="ECO:0007669"/>
    <property type="project" value="UniProtKB-KW"/>
</dbReference>
<dbReference type="CDD" id="cd01876">
    <property type="entry name" value="YihA_EngB"/>
    <property type="match status" value="1"/>
</dbReference>
<dbReference type="FunFam" id="3.40.50.300:FF:000098">
    <property type="entry name" value="Probable GTP-binding protein EngB"/>
    <property type="match status" value="1"/>
</dbReference>
<dbReference type="Gene3D" id="3.40.50.300">
    <property type="entry name" value="P-loop containing nucleotide triphosphate hydrolases"/>
    <property type="match status" value="1"/>
</dbReference>
<dbReference type="HAMAP" id="MF_00321">
    <property type="entry name" value="GTPase_EngB"/>
    <property type="match status" value="1"/>
</dbReference>
<dbReference type="InterPro" id="IPR030393">
    <property type="entry name" value="G_ENGB_dom"/>
</dbReference>
<dbReference type="InterPro" id="IPR006073">
    <property type="entry name" value="GTP-bd"/>
</dbReference>
<dbReference type="InterPro" id="IPR019987">
    <property type="entry name" value="GTP-bd_ribosome_bio_YsxC"/>
</dbReference>
<dbReference type="InterPro" id="IPR027417">
    <property type="entry name" value="P-loop_NTPase"/>
</dbReference>
<dbReference type="NCBIfam" id="TIGR03598">
    <property type="entry name" value="GTPase_YsxC"/>
    <property type="match status" value="1"/>
</dbReference>
<dbReference type="PANTHER" id="PTHR11649:SF13">
    <property type="entry name" value="ENGB-TYPE G DOMAIN-CONTAINING PROTEIN"/>
    <property type="match status" value="1"/>
</dbReference>
<dbReference type="PANTHER" id="PTHR11649">
    <property type="entry name" value="MSS1/TRME-RELATED GTP-BINDING PROTEIN"/>
    <property type="match status" value="1"/>
</dbReference>
<dbReference type="Pfam" id="PF01926">
    <property type="entry name" value="MMR_HSR1"/>
    <property type="match status" value="1"/>
</dbReference>
<dbReference type="SUPFAM" id="SSF52540">
    <property type="entry name" value="P-loop containing nucleoside triphosphate hydrolases"/>
    <property type="match status" value="1"/>
</dbReference>
<dbReference type="PROSITE" id="PS51706">
    <property type="entry name" value="G_ENGB"/>
    <property type="match status" value="1"/>
</dbReference>
<comment type="function">
    <text evidence="1">Necessary for normal cell division and for the maintenance of normal septation.</text>
</comment>
<comment type="cofactor">
    <cofactor evidence="1">
        <name>Mg(2+)</name>
        <dbReference type="ChEBI" id="CHEBI:18420"/>
    </cofactor>
</comment>
<comment type="similarity">
    <text evidence="1">Belongs to the TRAFAC class TrmE-Era-EngA-EngB-Septin-like GTPase superfamily. EngB GTPase family.</text>
</comment>
<reference key="1">
    <citation type="journal article" date="2007" name="Nat. Biotechnol.">
        <title>Complete genome sequence of the fish pathogen Flavobacterium psychrophilum.</title>
        <authorList>
            <person name="Duchaud E."/>
            <person name="Boussaha M."/>
            <person name="Loux V."/>
            <person name="Bernardet J.-F."/>
            <person name="Michel C."/>
            <person name="Kerouault B."/>
            <person name="Mondot S."/>
            <person name="Nicolas P."/>
            <person name="Bossy R."/>
            <person name="Caron C."/>
            <person name="Bessieres P."/>
            <person name="Gibrat J.-F."/>
            <person name="Claverol S."/>
            <person name="Dumetz F."/>
            <person name="Le Henaff M."/>
            <person name="Benmansour A."/>
        </authorList>
    </citation>
    <scope>NUCLEOTIDE SEQUENCE [LARGE SCALE GENOMIC DNA]</scope>
    <source>
        <strain>ATCC 49511 / DSM 21280 / CIP 103535 / JIP02/86</strain>
    </source>
</reference>
<proteinExistence type="inferred from homology"/>
<keyword id="KW-0131">Cell cycle</keyword>
<keyword id="KW-0132">Cell division</keyword>
<keyword id="KW-0342">GTP-binding</keyword>
<keyword id="KW-0460">Magnesium</keyword>
<keyword id="KW-0479">Metal-binding</keyword>
<keyword id="KW-0547">Nucleotide-binding</keyword>
<keyword id="KW-1185">Reference proteome</keyword>
<keyword id="KW-0717">Septation</keyword>
<organism>
    <name type="scientific">Flavobacterium psychrophilum (strain ATCC 49511 / DSM 21280 / CIP 103535 / JIP02/86)</name>
    <dbReference type="NCBI Taxonomy" id="402612"/>
    <lineage>
        <taxon>Bacteria</taxon>
        <taxon>Pseudomonadati</taxon>
        <taxon>Bacteroidota</taxon>
        <taxon>Flavobacteriia</taxon>
        <taxon>Flavobacteriales</taxon>
        <taxon>Flavobacteriaceae</taxon>
        <taxon>Flavobacterium</taxon>
    </lineage>
</organism>
<feature type="chain" id="PRO_1000005811" description="Probable GTP-binding protein EngB">
    <location>
        <begin position="1"/>
        <end position="205"/>
    </location>
</feature>
<feature type="domain" description="EngB-type G" evidence="1">
    <location>
        <begin position="22"/>
        <end position="198"/>
    </location>
</feature>
<feature type="binding site" evidence="1">
    <location>
        <begin position="30"/>
        <end position="37"/>
    </location>
    <ligand>
        <name>GTP</name>
        <dbReference type="ChEBI" id="CHEBI:37565"/>
    </ligand>
</feature>
<feature type="binding site" evidence="1">
    <location>
        <position position="37"/>
    </location>
    <ligand>
        <name>Mg(2+)</name>
        <dbReference type="ChEBI" id="CHEBI:18420"/>
    </ligand>
</feature>
<feature type="binding site" evidence="1">
    <location>
        <begin position="57"/>
        <end position="61"/>
    </location>
    <ligand>
        <name>GTP</name>
        <dbReference type="ChEBI" id="CHEBI:37565"/>
    </ligand>
</feature>
<feature type="binding site" evidence="1">
    <location>
        <position position="59"/>
    </location>
    <ligand>
        <name>Mg(2+)</name>
        <dbReference type="ChEBI" id="CHEBI:18420"/>
    </ligand>
</feature>
<feature type="binding site" evidence="1">
    <location>
        <begin position="75"/>
        <end position="78"/>
    </location>
    <ligand>
        <name>GTP</name>
        <dbReference type="ChEBI" id="CHEBI:37565"/>
    </ligand>
</feature>
<feature type="binding site" evidence="1">
    <location>
        <begin position="142"/>
        <end position="145"/>
    </location>
    <ligand>
        <name>GTP</name>
        <dbReference type="ChEBI" id="CHEBI:37565"/>
    </ligand>
</feature>
<feature type="binding site" evidence="1">
    <location>
        <begin position="177"/>
        <end position="179"/>
    </location>
    <ligand>
        <name>GTP</name>
        <dbReference type="ChEBI" id="CHEBI:37565"/>
    </ligand>
</feature>
<accession>A6H1A5</accession>
<protein>
    <recommendedName>
        <fullName evidence="1">Probable GTP-binding protein EngB</fullName>
    </recommendedName>
</protein>
<sequence length="205" mass="23490">MKINTAEFIISNSIVSLCPQEHLPEYAFIGRSNVGKSSLINMLTNHKSLAKTSGRPGKTQLINHFKINNNWFLVDLPGYGYAKVSKKTKEVFQQFITDYFEKREQLVCAFVLIDIRHEAQKIDLEFITYLGEIELPFCIVFTKADKISKGKVAQHVAAYRTALLKNNWEEMPHHFVTSATEHTGKESLLSYIDEVNQDIFKQNGF</sequence>
<name>ENGB_FLAPJ</name>
<gene>
    <name evidence="1" type="primary">engB</name>
    <name type="ordered locus">FP2067</name>
</gene>